<proteinExistence type="evidence at protein level"/>
<organism>
    <name type="scientific">Homo sapiens</name>
    <name type="common">Human</name>
    <dbReference type="NCBI Taxonomy" id="9606"/>
    <lineage>
        <taxon>Eukaryota</taxon>
        <taxon>Metazoa</taxon>
        <taxon>Chordata</taxon>
        <taxon>Craniata</taxon>
        <taxon>Vertebrata</taxon>
        <taxon>Euteleostomi</taxon>
        <taxon>Mammalia</taxon>
        <taxon>Eutheria</taxon>
        <taxon>Euarchontoglires</taxon>
        <taxon>Primates</taxon>
        <taxon>Haplorrhini</taxon>
        <taxon>Catarrhini</taxon>
        <taxon>Hominidae</taxon>
        <taxon>Homo</taxon>
    </lineage>
</organism>
<gene>
    <name type="primary">ZNF589</name>
    <name type="synonym">SZF1</name>
</gene>
<comment type="function">
    <text evidence="4 5">May play a role in hematopoietic stem/progenitor cell differentiation. May play a role as a DNA binding-dependent transcriptional repressor.</text>
</comment>
<comment type="subunit">
    <text evidence="5">Interacts with TRIM28.</text>
</comment>
<comment type="subcellular location">
    <subcellularLocation>
        <location evidence="7">Nucleus</location>
    </subcellularLocation>
</comment>
<comment type="alternative products">
    <event type="alternative splicing"/>
    <isoform>
        <id>Q86UQ0-1</id>
        <name>1</name>
        <sequence type="displayed"/>
    </isoform>
    <isoform>
        <id>Q86UQ0-2</id>
        <name>2</name>
        <name>SZF1-2</name>
        <sequence type="described" ref="VSP_028449 VSP_028450"/>
    </isoform>
    <isoform>
        <id>Q86UQ0-3</id>
        <name>3</name>
        <name>SZF1-1</name>
        <sequence type="described" ref="VSP_028449 VSP_028450 VSP_028451"/>
    </isoform>
</comment>
<comment type="tissue specificity">
    <text evidence="4">Isoform 2 is widely expressed. Isoform 3 is only expressed in CD34(+) cells.</text>
</comment>
<comment type="domain">
    <text>The KRAB domain mediates interaction with TRIM28.</text>
</comment>
<comment type="miscellaneous">
    <molecule>Isoform 2</molecule>
    <text evidence="9">Probable target of nonsense-mediated mRNA decay. The proposed CDS is dubious.</text>
</comment>
<comment type="miscellaneous">
    <molecule>Isoform 3</molecule>
    <text evidence="9">Probable target of nonsense-mediated mRNA decay. The proposed CDS is dubious. Isoform produced through aberrant splice sites.</text>
</comment>
<comment type="similarity">
    <text evidence="9">Belongs to the krueppel C2H2-type zinc-finger protein family.</text>
</comment>
<comment type="sequence caution" evidence="9">
    <conflict type="erroneous initiation">
        <sequence resource="EMBL-CDS" id="AAH05859"/>
    </conflict>
</comment>
<comment type="sequence caution" evidence="9">
    <conflict type="erroneous initiation">
        <sequence resource="EMBL-CDS" id="AAH06247"/>
    </conflict>
</comment>
<comment type="sequence caution" evidence="9">
    <conflict type="erroneous initiation">
        <sequence resource="EMBL-CDS" id="AAH48798"/>
    </conflict>
</comment>
<reference key="1">
    <citation type="journal article" date="1999" name="Exp. Hematol.">
        <title>SZF1: a novel KRAB-zinc finger gene expressed in CD34+ stem/progenitor cells.</title>
        <authorList>
            <person name="Liu C."/>
            <person name="Levenstein M."/>
            <person name="Chen J."/>
            <person name="Tsifrina E."/>
            <person name="Yonescu R."/>
            <person name="Griffin C."/>
            <person name="Civin C.I."/>
            <person name="Small D."/>
        </authorList>
    </citation>
    <scope>NUCLEOTIDE SEQUENCE [MRNA] (ISOFORMS 2 AND 3)</scope>
    <scope>FUNCTION</scope>
    <scope>TISSUE SPECIFICITY</scope>
    <scope>VARIANT ARG-216</scope>
</reference>
<reference key="2">
    <citation type="submission" date="2003-03" db="EMBL/GenBank/DDBJ databases">
        <title>Cloning and characterization of a novel KRAB-zinc finger protein.</title>
        <authorList>
            <person name="Shan Y.X."/>
            <person name="Yu L."/>
        </authorList>
    </citation>
    <scope>NUCLEOTIDE SEQUENCE [MRNA] (ISOFORM 1)</scope>
</reference>
<reference key="3">
    <citation type="journal article" date="2007" name="BMC Genomics">
        <title>The full-ORF clone resource of the German cDNA consortium.</title>
        <authorList>
            <person name="Bechtel S."/>
            <person name="Rosenfelder H."/>
            <person name="Duda A."/>
            <person name="Schmidt C.P."/>
            <person name="Ernst U."/>
            <person name="Wellenreuther R."/>
            <person name="Mehrle A."/>
            <person name="Schuster C."/>
            <person name="Bahr A."/>
            <person name="Bloecker H."/>
            <person name="Heubner D."/>
            <person name="Hoerlein A."/>
            <person name="Michel G."/>
            <person name="Wedler H."/>
            <person name="Koehrer K."/>
            <person name="Ottenwaelder B."/>
            <person name="Poustka A."/>
            <person name="Wiemann S."/>
            <person name="Schupp I."/>
        </authorList>
    </citation>
    <scope>NUCLEOTIDE SEQUENCE [LARGE SCALE MRNA] (ISOFORM 1)</scope>
    <source>
        <tissue>Lymph node</tissue>
    </source>
</reference>
<reference key="4">
    <citation type="submission" date="2005-07" db="EMBL/GenBank/DDBJ databases">
        <authorList>
            <person name="Mural R.J."/>
            <person name="Istrail S."/>
            <person name="Sutton G.G."/>
            <person name="Florea L."/>
            <person name="Halpern A.L."/>
            <person name="Mobarry C.M."/>
            <person name="Lippert R."/>
            <person name="Walenz B."/>
            <person name="Shatkay H."/>
            <person name="Dew I."/>
            <person name="Miller J.R."/>
            <person name="Flanigan M.J."/>
            <person name="Edwards N.J."/>
            <person name="Bolanos R."/>
            <person name="Fasulo D."/>
            <person name="Halldorsson B.V."/>
            <person name="Hannenhalli S."/>
            <person name="Turner R."/>
            <person name="Yooseph S."/>
            <person name="Lu F."/>
            <person name="Nusskern D.R."/>
            <person name="Shue B.C."/>
            <person name="Zheng X.H."/>
            <person name="Zhong F."/>
            <person name="Delcher A.L."/>
            <person name="Huson D.H."/>
            <person name="Kravitz S.A."/>
            <person name="Mouchard L."/>
            <person name="Reinert K."/>
            <person name="Remington K.A."/>
            <person name="Clark A.G."/>
            <person name="Waterman M.S."/>
            <person name="Eichler E.E."/>
            <person name="Adams M.D."/>
            <person name="Hunkapiller M.W."/>
            <person name="Myers E.W."/>
            <person name="Venter J.C."/>
        </authorList>
    </citation>
    <scope>NUCLEOTIDE SEQUENCE [LARGE SCALE GENOMIC DNA]</scope>
</reference>
<reference key="5">
    <citation type="journal article" date="2004" name="Genome Res.">
        <title>The status, quality, and expansion of the NIH full-length cDNA project: the Mammalian Gene Collection (MGC).</title>
        <authorList>
            <consortium name="The MGC Project Team"/>
        </authorList>
    </citation>
    <scope>NUCLEOTIDE SEQUENCE [LARGE SCALE MRNA] (ISOFORM 1)</scope>
    <scope>VARIANTS ALA-12 AND ARG-216</scope>
    <source>
        <tissue>Eye</tissue>
        <tissue>Lung</tissue>
        <tissue>Muscle</tissue>
    </source>
</reference>
<reference key="6">
    <citation type="journal article" date="2002" name="Cancer Res.">
        <title>A common DNA-binding site for SZF1 and the BRCA1-associated zinc finger protein, ZBRK1.</title>
        <authorList>
            <person name="Peng H."/>
            <person name="Zheng L."/>
            <person name="Lee W.H."/>
            <person name="Rux J.J."/>
            <person name="Rauscher F.J. III"/>
        </authorList>
    </citation>
    <scope>INTERACTION WITH TRIM28</scope>
    <scope>FUNCTION</scope>
</reference>
<reference key="7">
    <citation type="journal article" date="2008" name="Mol. Cell">
        <title>Kinase-selective enrichment enables quantitative phosphoproteomics of the kinome across the cell cycle.</title>
        <authorList>
            <person name="Daub H."/>
            <person name="Olsen J.V."/>
            <person name="Bairlein M."/>
            <person name="Gnad F."/>
            <person name="Oppermann F.S."/>
            <person name="Korner R."/>
            <person name="Greff Z."/>
            <person name="Keri G."/>
            <person name="Stemmann O."/>
            <person name="Mann M."/>
        </authorList>
    </citation>
    <scope>PHOSPHORYLATION [LARGE SCALE ANALYSIS] AT SER-190</scope>
    <scope>IDENTIFICATION BY MASS SPECTROMETRY [LARGE SCALE ANALYSIS]</scope>
    <source>
        <tissue>Cervix carcinoma</tissue>
    </source>
</reference>
<reference key="8">
    <citation type="journal article" date="2013" name="Cell. Mol. Life Sci.">
        <title>Novel activity of KRAB domain that functions to reinforce nuclear localization of KRAB-containing zinc finger proteins by interacting with KAP1.</title>
        <authorList>
            <person name="Wang W."/>
            <person name="Cai J."/>
            <person name="Wu Y."/>
            <person name="Hu L."/>
            <person name="Chen Z."/>
            <person name="Hu J."/>
            <person name="Chen Z."/>
            <person name="Li W."/>
            <person name="Guo M."/>
            <person name="Huang Z."/>
        </authorList>
    </citation>
    <scope>SUBCELLULAR LOCATION</scope>
</reference>
<accession>Q86UQ0</accession>
<accession>Q86UC9</accession>
<accession>Q9BRI6</accession>
<accession>Q9BRY3</accession>
<accession>Q9Y611</accession>
<accession>Q9Y612</accession>
<sequence length="364" mass="41189">MWAPREQLLGWTAEALPAKDSAWPWEEKPRYLGPVTFEDVAVLFTEAEWKRLSLEQRNLYKEVMLENLRNLVSLAESKPEVHTCPSCPLAFGSQQFLSQDELHNHPIPGFHAGNQLHPGNPCPEDQPQSQHPSDKNHRGAEAEDQRVEGGVRPLFWSTNERGALVGFSSLFQRPPISSWGGNRILEIQLSPAQNASSEEVDRISKRAETPGFGAVTFGECALAFNQKSNLFRQKAVTAEKSSDKRQSQVCRECGRGFSRKSQLIIHQRTHTGEKPYVCGECGRGFIVESVLRNHLSTHSGEKPYVCSHCGRGFSCKPYLIRHQRTHTREKSFMCTVCGRGFREKSELIKHQRIHTGDKPYVCRD</sequence>
<dbReference type="EMBL" id="AF114816">
    <property type="protein sequence ID" value="AAD38879.1"/>
    <property type="molecule type" value="mRNA"/>
</dbReference>
<dbReference type="EMBL" id="AF114817">
    <property type="protein sequence ID" value="AAD38880.1"/>
    <property type="molecule type" value="mRNA"/>
</dbReference>
<dbReference type="EMBL" id="AY258146">
    <property type="protein sequence ID" value="AAP14679.1"/>
    <property type="molecule type" value="mRNA"/>
</dbReference>
<dbReference type="EMBL" id="AL832831">
    <property type="protein sequence ID" value="CAI46129.1"/>
    <property type="molecule type" value="mRNA"/>
</dbReference>
<dbReference type="EMBL" id="CH471055">
    <property type="protein sequence ID" value="EAW64856.1"/>
    <property type="molecule type" value="Genomic_DNA"/>
</dbReference>
<dbReference type="EMBL" id="BC005859">
    <property type="protein sequence ID" value="AAH05859.2"/>
    <property type="status" value="ALT_INIT"/>
    <property type="molecule type" value="mRNA"/>
</dbReference>
<dbReference type="EMBL" id="BC006247">
    <property type="protein sequence ID" value="AAH06247.2"/>
    <property type="status" value="ALT_INIT"/>
    <property type="molecule type" value="mRNA"/>
</dbReference>
<dbReference type="EMBL" id="BC048798">
    <property type="protein sequence ID" value="AAH48798.1"/>
    <property type="status" value="ALT_INIT"/>
    <property type="molecule type" value="mRNA"/>
</dbReference>
<dbReference type="CCDS" id="CCDS43085.1">
    <molecule id="Q86UQ0-1"/>
</dbReference>
<dbReference type="RefSeq" id="NP_057173.2">
    <molecule id="Q86UQ0-1"/>
    <property type="nucleotide sequence ID" value="NM_016089.3"/>
</dbReference>
<dbReference type="RefSeq" id="XP_016862067.1">
    <property type="nucleotide sequence ID" value="XM_017006578.1"/>
</dbReference>
<dbReference type="RefSeq" id="XP_016862068.1">
    <property type="nucleotide sequence ID" value="XM_017006579.1"/>
</dbReference>
<dbReference type="SMR" id="Q86UQ0"/>
<dbReference type="BioGRID" id="119515">
    <property type="interactions" value="11"/>
</dbReference>
<dbReference type="FunCoup" id="Q86UQ0">
    <property type="interactions" value="317"/>
</dbReference>
<dbReference type="IntAct" id="Q86UQ0">
    <property type="interactions" value="7"/>
</dbReference>
<dbReference type="STRING" id="9606.ENSP00000346729"/>
<dbReference type="iPTMnet" id="Q86UQ0"/>
<dbReference type="PhosphoSitePlus" id="Q86UQ0"/>
<dbReference type="BioMuta" id="ZNF589"/>
<dbReference type="DMDM" id="74759403"/>
<dbReference type="jPOST" id="Q86UQ0"/>
<dbReference type="MassIVE" id="Q86UQ0"/>
<dbReference type="PaxDb" id="9606-ENSP00000346729"/>
<dbReference type="PeptideAtlas" id="Q86UQ0"/>
<dbReference type="ProteomicsDB" id="69858">
    <molecule id="Q86UQ0-1"/>
</dbReference>
<dbReference type="ProteomicsDB" id="69859">
    <molecule id="Q86UQ0-2"/>
</dbReference>
<dbReference type="ProteomicsDB" id="69860">
    <molecule id="Q86UQ0-3"/>
</dbReference>
<dbReference type="Antibodypedia" id="831">
    <property type="antibodies" value="101 antibodies from 15 providers"/>
</dbReference>
<dbReference type="DNASU" id="51385"/>
<dbReference type="Ensembl" id="ENST00000354698.8">
    <molecule id="Q86UQ0-1"/>
    <property type="protein sequence ID" value="ENSP00000346729.3"/>
    <property type="gene ID" value="ENSG00000164048.14"/>
</dbReference>
<dbReference type="Ensembl" id="ENST00000448461.5">
    <molecule id="Q86UQ0-1"/>
    <property type="protein sequence ID" value="ENSP00000404592.1"/>
    <property type="gene ID" value="ENSG00000164048.14"/>
</dbReference>
<dbReference type="GeneID" id="51385"/>
<dbReference type="KEGG" id="hsa:51385"/>
<dbReference type="MANE-Select" id="ENST00000354698.8">
    <property type="protein sequence ID" value="ENSP00000346729.3"/>
    <property type="RefSeq nucleotide sequence ID" value="NM_016089.3"/>
    <property type="RefSeq protein sequence ID" value="NP_057173.2"/>
</dbReference>
<dbReference type="UCSC" id="uc003csl.5">
    <molecule id="Q86UQ0-1"/>
    <property type="organism name" value="human"/>
</dbReference>
<dbReference type="AGR" id="HGNC:16747"/>
<dbReference type="CTD" id="51385"/>
<dbReference type="DisGeNET" id="51385"/>
<dbReference type="GeneCards" id="ZNF589"/>
<dbReference type="HGNC" id="HGNC:16747">
    <property type="gene designation" value="ZNF589"/>
</dbReference>
<dbReference type="HPA" id="ENSG00000164048">
    <property type="expression patterns" value="Low tissue specificity"/>
</dbReference>
<dbReference type="MalaCards" id="ZNF589"/>
<dbReference type="MIM" id="616702">
    <property type="type" value="gene"/>
</dbReference>
<dbReference type="neXtProt" id="NX_Q86UQ0"/>
<dbReference type="OpenTargets" id="ENSG00000164048"/>
<dbReference type="PharmGKB" id="PA134988473"/>
<dbReference type="VEuPathDB" id="HostDB:ENSG00000164048"/>
<dbReference type="eggNOG" id="KOG1721">
    <property type="taxonomic scope" value="Eukaryota"/>
</dbReference>
<dbReference type="GeneTree" id="ENSGT00940000164260"/>
<dbReference type="HOGENOM" id="CLU_002678_0_7_1"/>
<dbReference type="InParanoid" id="Q86UQ0"/>
<dbReference type="OMA" id="KPYVCRN"/>
<dbReference type="OrthoDB" id="9529133at2759"/>
<dbReference type="PAN-GO" id="Q86UQ0">
    <property type="GO annotations" value="3 GO annotations based on evolutionary models"/>
</dbReference>
<dbReference type="PhylomeDB" id="Q86UQ0"/>
<dbReference type="TreeFam" id="TF338096"/>
<dbReference type="PathwayCommons" id="Q86UQ0"/>
<dbReference type="Reactome" id="R-HSA-212436">
    <property type="pathway name" value="Generic Transcription Pathway"/>
</dbReference>
<dbReference type="SignaLink" id="Q86UQ0"/>
<dbReference type="BioGRID-ORCS" id="51385">
    <property type="hits" value="12 hits in 1177 CRISPR screens"/>
</dbReference>
<dbReference type="ChiTaRS" id="ZNF589">
    <property type="organism name" value="human"/>
</dbReference>
<dbReference type="GenomeRNAi" id="51385"/>
<dbReference type="Pharos" id="Q86UQ0">
    <property type="development level" value="Tbio"/>
</dbReference>
<dbReference type="PRO" id="PR:Q86UQ0"/>
<dbReference type="Proteomes" id="UP000005640">
    <property type="component" value="Chromosome 3"/>
</dbReference>
<dbReference type="RNAct" id="Q86UQ0">
    <property type="molecule type" value="protein"/>
</dbReference>
<dbReference type="Bgee" id="ENSG00000164048">
    <property type="expression patterns" value="Expressed in buccal mucosa cell and 150 other cell types or tissues"/>
</dbReference>
<dbReference type="ExpressionAtlas" id="Q86UQ0">
    <property type="expression patterns" value="baseline and differential"/>
</dbReference>
<dbReference type="GO" id="GO:0005654">
    <property type="term" value="C:nucleoplasm"/>
    <property type="evidence" value="ECO:0000314"/>
    <property type="project" value="HPA"/>
</dbReference>
<dbReference type="GO" id="GO:0005634">
    <property type="term" value="C:nucleus"/>
    <property type="evidence" value="ECO:0000314"/>
    <property type="project" value="UniProtKB"/>
</dbReference>
<dbReference type="GO" id="GO:0001227">
    <property type="term" value="F:DNA-binding transcription repressor activity, RNA polymerase II-specific"/>
    <property type="evidence" value="ECO:0000314"/>
    <property type="project" value="NTNU_SB"/>
</dbReference>
<dbReference type="GO" id="GO:0000977">
    <property type="term" value="F:RNA polymerase II transcription regulatory region sequence-specific DNA binding"/>
    <property type="evidence" value="ECO:0000315"/>
    <property type="project" value="NTNU_SB"/>
</dbReference>
<dbReference type="GO" id="GO:0008270">
    <property type="term" value="F:zinc ion binding"/>
    <property type="evidence" value="ECO:0007669"/>
    <property type="project" value="UniProtKB-KW"/>
</dbReference>
<dbReference type="GO" id="GO:0000122">
    <property type="term" value="P:negative regulation of transcription by RNA polymerase II"/>
    <property type="evidence" value="ECO:0000314"/>
    <property type="project" value="NTNU_SB"/>
</dbReference>
<dbReference type="CDD" id="cd07765">
    <property type="entry name" value="KRAB_A-box"/>
    <property type="match status" value="1"/>
</dbReference>
<dbReference type="FunFam" id="3.30.160.60:FF:000155">
    <property type="entry name" value="zinc finger protein 133 isoform X1"/>
    <property type="match status" value="2"/>
</dbReference>
<dbReference type="FunFam" id="3.30.160.60:FF:001286">
    <property type="entry name" value="Zinc finger protein 485"/>
    <property type="match status" value="1"/>
</dbReference>
<dbReference type="FunFam" id="3.30.160.60:FF:001895">
    <property type="entry name" value="Zinc finger protein 559"/>
    <property type="match status" value="1"/>
</dbReference>
<dbReference type="Gene3D" id="6.10.140.140">
    <property type="match status" value="1"/>
</dbReference>
<dbReference type="Gene3D" id="3.30.160.60">
    <property type="entry name" value="Classic Zinc Finger"/>
    <property type="match status" value="5"/>
</dbReference>
<dbReference type="InterPro" id="IPR001909">
    <property type="entry name" value="KRAB"/>
</dbReference>
<dbReference type="InterPro" id="IPR036051">
    <property type="entry name" value="KRAB_dom_sf"/>
</dbReference>
<dbReference type="InterPro" id="IPR048414">
    <property type="entry name" value="PDRM9-like_Znf-C2H2"/>
</dbReference>
<dbReference type="InterPro" id="IPR036236">
    <property type="entry name" value="Znf_C2H2_sf"/>
</dbReference>
<dbReference type="InterPro" id="IPR013087">
    <property type="entry name" value="Znf_C2H2_type"/>
</dbReference>
<dbReference type="PANTHER" id="PTHR24381">
    <property type="entry name" value="ZINC FINGER PROTEIN"/>
    <property type="match status" value="1"/>
</dbReference>
<dbReference type="PANTHER" id="PTHR24381:SF343">
    <property type="entry name" value="ZINC FINGER PROTEIN 589"/>
    <property type="match status" value="1"/>
</dbReference>
<dbReference type="Pfam" id="PF01352">
    <property type="entry name" value="KRAB"/>
    <property type="match status" value="1"/>
</dbReference>
<dbReference type="Pfam" id="PF00096">
    <property type="entry name" value="zf-C2H2"/>
    <property type="match status" value="4"/>
</dbReference>
<dbReference type="Pfam" id="PF21225">
    <property type="entry name" value="zf-C2H2_5"/>
    <property type="match status" value="1"/>
</dbReference>
<dbReference type="SMART" id="SM00349">
    <property type="entry name" value="KRAB"/>
    <property type="match status" value="1"/>
</dbReference>
<dbReference type="SMART" id="SM00355">
    <property type="entry name" value="ZnF_C2H2"/>
    <property type="match status" value="5"/>
</dbReference>
<dbReference type="SUPFAM" id="SSF57667">
    <property type="entry name" value="beta-beta-alpha zinc fingers"/>
    <property type="match status" value="2"/>
</dbReference>
<dbReference type="SUPFAM" id="SSF109640">
    <property type="entry name" value="KRAB domain (Kruppel-associated box)"/>
    <property type="match status" value="1"/>
</dbReference>
<dbReference type="PROSITE" id="PS50805">
    <property type="entry name" value="KRAB"/>
    <property type="match status" value="1"/>
</dbReference>
<dbReference type="PROSITE" id="PS00028">
    <property type="entry name" value="ZINC_FINGER_C2H2_1"/>
    <property type="match status" value="4"/>
</dbReference>
<dbReference type="PROSITE" id="PS50157">
    <property type="entry name" value="ZINC_FINGER_C2H2_2"/>
    <property type="match status" value="4"/>
</dbReference>
<feature type="chain" id="PRO_0000306325" description="Zinc finger protein 589">
    <location>
        <begin position="1"/>
        <end position="364"/>
    </location>
</feature>
<feature type="domain" description="KRAB" evidence="2">
    <location>
        <begin position="35"/>
        <end position="108"/>
    </location>
</feature>
<feature type="zinc finger region" description="C2H2-type 1" evidence="1">
    <location>
        <begin position="248"/>
        <end position="270"/>
    </location>
</feature>
<feature type="zinc finger region" description="C2H2-type 2" evidence="1">
    <location>
        <begin position="276"/>
        <end position="298"/>
    </location>
</feature>
<feature type="zinc finger region" description="C2H2-type 3" evidence="1">
    <location>
        <begin position="304"/>
        <end position="326"/>
    </location>
</feature>
<feature type="zinc finger region" description="C2H2-type 4" evidence="1">
    <location>
        <begin position="332"/>
        <end position="354"/>
    </location>
</feature>
<feature type="region of interest" description="Disordered" evidence="3">
    <location>
        <begin position="103"/>
        <end position="148"/>
    </location>
</feature>
<feature type="compositionally biased region" description="Basic and acidic residues" evidence="3">
    <location>
        <begin position="132"/>
        <end position="148"/>
    </location>
</feature>
<feature type="modified residue" description="Phosphoserine" evidence="10">
    <location>
        <position position="190"/>
    </location>
</feature>
<feature type="splice variant" id="VSP_028449" description="In isoform 2 and isoform 3." evidence="8">
    <original>MWAPREQLLGWTAEALPAKDSAWPWEEKPRYL</original>
    <variation>MIDFQMLNQLCRTIINPSVIPCLKYCGDQI</variation>
    <location>
        <begin position="1"/>
        <end position="32"/>
    </location>
</feature>
<feature type="splice variant" id="VSP_028450" description="In isoform 2 and isoform 3." evidence="8">
    <location>
        <position position="75"/>
    </location>
</feature>
<feature type="splice variant" id="VSP_028451" description="In isoform 3." evidence="8">
    <original>IHTGDKPYVCRD</original>
    <variation>CQVTVPLEEWSLHLTTSFCNCVLPLASMTLSCFIFFYISSLCCFLSYPTFRFYSEFSLQPYNLRDTFTRSPS</variation>
    <location>
        <begin position="353"/>
        <end position="364"/>
    </location>
</feature>
<feature type="sequence variant" id="VAR_052871" description="In dbSNP:rs9847953." evidence="6">
    <original>T</original>
    <variation>A</variation>
    <location>
        <position position="12"/>
    </location>
</feature>
<feature type="sequence variant" id="VAR_035290" description="In dbSNP:rs11718329." evidence="4 6">
    <original>T</original>
    <variation>R</variation>
    <location>
        <position position="216"/>
    </location>
</feature>
<evidence type="ECO:0000255" key="1">
    <source>
        <dbReference type="PROSITE-ProRule" id="PRU00042"/>
    </source>
</evidence>
<evidence type="ECO:0000255" key="2">
    <source>
        <dbReference type="PROSITE-ProRule" id="PRU00119"/>
    </source>
</evidence>
<evidence type="ECO:0000256" key="3">
    <source>
        <dbReference type="SAM" id="MobiDB-lite"/>
    </source>
</evidence>
<evidence type="ECO:0000269" key="4">
    <source>
    </source>
</evidence>
<evidence type="ECO:0000269" key="5">
    <source>
    </source>
</evidence>
<evidence type="ECO:0000269" key="6">
    <source>
    </source>
</evidence>
<evidence type="ECO:0000269" key="7">
    <source>
    </source>
</evidence>
<evidence type="ECO:0000303" key="8">
    <source>
    </source>
</evidence>
<evidence type="ECO:0000305" key="9"/>
<evidence type="ECO:0007744" key="10">
    <source>
    </source>
</evidence>
<protein>
    <recommendedName>
        <fullName>Zinc finger protein 589</fullName>
    </recommendedName>
    <alternativeName>
        <fullName>Stem cell zinc finger protein 1</fullName>
    </alternativeName>
</protein>
<keyword id="KW-0025">Alternative splicing</keyword>
<keyword id="KW-0238">DNA-binding</keyword>
<keyword id="KW-0479">Metal-binding</keyword>
<keyword id="KW-0539">Nucleus</keyword>
<keyword id="KW-0597">Phosphoprotein</keyword>
<keyword id="KW-1267">Proteomics identification</keyword>
<keyword id="KW-1185">Reference proteome</keyword>
<keyword id="KW-0677">Repeat</keyword>
<keyword id="KW-0678">Repressor</keyword>
<keyword id="KW-0862">Zinc</keyword>
<keyword id="KW-0863">Zinc-finger</keyword>
<name>ZN589_HUMAN</name>